<keyword id="KW-0217">Developmental protein</keyword>
<keyword id="KW-0238">DNA-binding</keyword>
<keyword id="KW-0371">Homeobox</keyword>
<keyword id="KW-0539">Nucleus</keyword>
<keyword id="KW-0804">Transcription</keyword>
<keyword id="KW-0805">Transcription regulation</keyword>
<reference key="1">
    <citation type="journal article" date="1992" name="Gene">
        <title>Homeobox-containing genes in the newt are organized in clusters similar to other vertebrates.</title>
        <authorList>
            <person name="Belleville S."/>
            <person name="Beauchemin M."/>
            <person name="Tremblay M."/>
            <person name="Noiseux N."/>
            <person name="Savard P."/>
        </authorList>
    </citation>
    <scope>NUCLEOTIDE SEQUENCE [GENOMIC DNA]</scope>
</reference>
<comment type="function">
    <text>Sequence-specific transcription factor which is part of a developmental regulatory system that provides cells with specific positional identities on the anterior-posterior axis.</text>
</comment>
<comment type="subcellular location">
    <subcellularLocation>
        <location>Nucleus</location>
    </subcellularLocation>
</comment>
<comment type="similarity">
    <text evidence="3">Belongs to the Antp homeobox family.</text>
</comment>
<feature type="chain" id="PRO_0000200042" description="Homeobox protein Hox-A2">
    <location>
        <begin position="1" status="less than"/>
        <end position="90" status="greater than"/>
    </location>
</feature>
<feature type="DNA-binding region" description="Homeobox" evidence="1">
    <location>
        <begin position="2"/>
        <end position="61"/>
    </location>
</feature>
<feature type="region of interest" description="Disordered" evidence="2">
    <location>
        <begin position="55"/>
        <end position="90"/>
    </location>
</feature>
<feature type="compositionally biased region" description="Acidic residues" evidence="2">
    <location>
        <begin position="80"/>
        <end position="90"/>
    </location>
</feature>
<feature type="non-terminal residue">
    <location>
        <position position="1"/>
    </location>
</feature>
<feature type="non-terminal residue">
    <location>
        <position position="90"/>
    </location>
</feature>
<proteinExistence type="inferred from homology"/>
<organism>
    <name type="scientific">Notophthalmus viridescens</name>
    <name type="common">Eastern newt</name>
    <name type="synonym">Triturus viridescens</name>
    <dbReference type="NCBI Taxonomy" id="8316"/>
    <lineage>
        <taxon>Eukaryota</taxon>
        <taxon>Metazoa</taxon>
        <taxon>Chordata</taxon>
        <taxon>Craniata</taxon>
        <taxon>Vertebrata</taxon>
        <taxon>Euteleostomi</taxon>
        <taxon>Amphibia</taxon>
        <taxon>Batrachia</taxon>
        <taxon>Caudata</taxon>
        <taxon>Salamandroidea</taxon>
        <taxon>Salamandridae</taxon>
        <taxon>Pleurodelinae</taxon>
        <taxon>Notophthalmus</taxon>
    </lineage>
</organism>
<sequence length="90" mass="10764">GSRRLRTAYTNTQLLELEKEFHFNKYLCRPRRVEIAALLDLTERQVKVWFQNRRMKHKRQTQCKENQNGEGKGKGLEEGDRSEDEEEKAL</sequence>
<name>HXA2_NOTVI</name>
<accession>P31261</accession>
<evidence type="ECO:0000255" key="1">
    <source>
        <dbReference type="PROSITE-ProRule" id="PRU00108"/>
    </source>
</evidence>
<evidence type="ECO:0000256" key="2">
    <source>
        <dbReference type="SAM" id="MobiDB-lite"/>
    </source>
</evidence>
<evidence type="ECO:0000305" key="3"/>
<protein>
    <recommendedName>
        <fullName>Homeobox protein Hox-A2</fullName>
    </recommendedName>
    <alternativeName>
        <fullName>Homeobox protein Hbox-2.8</fullName>
        <shortName>NvHbox-2.8</shortName>
    </alternativeName>
</protein>
<dbReference type="EMBL" id="M84002">
    <property type="protein sequence ID" value="AAA49396.1"/>
    <property type="molecule type" value="Genomic_DNA"/>
</dbReference>
<dbReference type="PIR" id="JC1163">
    <property type="entry name" value="JC1163"/>
</dbReference>
<dbReference type="SMR" id="P31261"/>
<dbReference type="GO" id="GO:0005634">
    <property type="term" value="C:nucleus"/>
    <property type="evidence" value="ECO:0007669"/>
    <property type="project" value="UniProtKB-SubCell"/>
</dbReference>
<dbReference type="GO" id="GO:0000981">
    <property type="term" value="F:DNA-binding transcription factor activity, RNA polymerase II-specific"/>
    <property type="evidence" value="ECO:0007669"/>
    <property type="project" value="InterPro"/>
</dbReference>
<dbReference type="GO" id="GO:0000978">
    <property type="term" value="F:RNA polymerase II cis-regulatory region sequence-specific DNA binding"/>
    <property type="evidence" value="ECO:0007669"/>
    <property type="project" value="TreeGrafter"/>
</dbReference>
<dbReference type="CDD" id="cd00086">
    <property type="entry name" value="homeodomain"/>
    <property type="match status" value="1"/>
</dbReference>
<dbReference type="FunFam" id="1.10.10.60:FF:000176">
    <property type="entry name" value="pancreas/duodenum homeobox protein 1"/>
    <property type="match status" value="1"/>
</dbReference>
<dbReference type="Gene3D" id="1.10.10.60">
    <property type="entry name" value="Homeodomain-like"/>
    <property type="match status" value="1"/>
</dbReference>
<dbReference type="InterPro" id="IPR001356">
    <property type="entry name" value="HD"/>
</dbReference>
<dbReference type="InterPro" id="IPR020479">
    <property type="entry name" value="HD_metazoa"/>
</dbReference>
<dbReference type="InterPro" id="IPR017970">
    <property type="entry name" value="Homeobox_CS"/>
</dbReference>
<dbReference type="InterPro" id="IPR009057">
    <property type="entry name" value="Homeodomain-like_sf"/>
</dbReference>
<dbReference type="PANTHER" id="PTHR45664:SF3">
    <property type="entry name" value="HOMEOBOX PROTEIN HOX-A2"/>
    <property type="match status" value="1"/>
</dbReference>
<dbReference type="PANTHER" id="PTHR45664">
    <property type="entry name" value="PROTEIN ZERKNUELLT 1-RELATED"/>
    <property type="match status" value="1"/>
</dbReference>
<dbReference type="Pfam" id="PF00046">
    <property type="entry name" value="Homeodomain"/>
    <property type="match status" value="1"/>
</dbReference>
<dbReference type="PRINTS" id="PR00024">
    <property type="entry name" value="HOMEOBOX"/>
</dbReference>
<dbReference type="SMART" id="SM00389">
    <property type="entry name" value="HOX"/>
    <property type="match status" value="1"/>
</dbReference>
<dbReference type="SUPFAM" id="SSF46689">
    <property type="entry name" value="Homeodomain-like"/>
    <property type="match status" value="1"/>
</dbReference>
<dbReference type="PROSITE" id="PS00027">
    <property type="entry name" value="HOMEOBOX_1"/>
    <property type="match status" value="1"/>
</dbReference>
<dbReference type="PROSITE" id="PS50071">
    <property type="entry name" value="HOMEOBOX_2"/>
    <property type="match status" value="1"/>
</dbReference>